<reference key="1">
    <citation type="journal article" date="1986" name="Genetics">
        <title>Sequence and transcripts of the bacteriophage T4 DNA repair gene uvsY.</title>
        <authorList>
            <person name="Gruidl M.E."/>
            <person name="Mosig G."/>
        </authorList>
    </citation>
    <scope>NUCLEOTIDE SEQUENCE [GENOMIC DNA]</scope>
</reference>
<reference key="2">
    <citation type="journal article" date="2003" name="Microbiol. Mol. Biol. Rev.">
        <title>Bacteriophage T4 genome.</title>
        <authorList>
            <person name="Miller E.S."/>
            <person name="Kutter E."/>
            <person name="Mosig G."/>
            <person name="Arisaka F."/>
            <person name="Kunisawa T."/>
            <person name="Ruger W."/>
        </authorList>
    </citation>
    <scope>NUCLEOTIDE SEQUENCE [LARGE SCALE GENOMIC DNA]</scope>
</reference>
<name>Y11B_BPT4</name>
<sequence length="74" mass="8962">MRYSIDDAFNYEEEFETEIQFLMKKHNLKRQDIRILADHPCGEDVLYIKGKFAGYLDEYFYSKDMGIDMHMRVV</sequence>
<protein>
    <recommendedName>
        <fullName>Uncharacterized 9.0 kDa protein in uvsW-uvsY intergenic region</fullName>
    </recommendedName>
</protein>
<proteinExistence type="predicted"/>
<keyword id="KW-1185">Reference proteome</keyword>
<organism>
    <name type="scientific">Enterobacteria phage T4</name>
    <name type="common">Bacteriophage T4</name>
    <dbReference type="NCBI Taxonomy" id="10665"/>
    <lineage>
        <taxon>Viruses</taxon>
        <taxon>Duplodnaviria</taxon>
        <taxon>Heunggongvirae</taxon>
        <taxon>Uroviricota</taxon>
        <taxon>Caudoviricetes</taxon>
        <taxon>Straboviridae</taxon>
        <taxon>Tevenvirinae</taxon>
        <taxon>Tequatrovirus</taxon>
    </lineage>
</organism>
<dbReference type="EMBL" id="X05134">
    <property type="protein sequence ID" value="CAA28780.1"/>
    <property type="molecule type" value="Genomic_DNA"/>
</dbReference>
<dbReference type="EMBL" id="X04856">
    <property type="protein sequence ID" value="CAA28550.1"/>
    <property type="molecule type" value="Genomic_DNA"/>
</dbReference>
<dbReference type="EMBL" id="AF158101">
    <property type="protein sequence ID" value="AAD42524.1"/>
    <property type="molecule type" value="Genomic_DNA"/>
</dbReference>
<dbReference type="PIR" id="B45963">
    <property type="entry name" value="B45963"/>
</dbReference>
<dbReference type="RefSeq" id="NP_049798.1">
    <property type="nucleotide sequence ID" value="NC_000866.4"/>
</dbReference>
<dbReference type="GeneID" id="1258728"/>
<dbReference type="KEGG" id="vg:1258728"/>
<dbReference type="OrthoDB" id="21738at10239"/>
<dbReference type="Proteomes" id="UP000009087">
    <property type="component" value="Segment"/>
</dbReference>
<organismHost>
    <name type="scientific">Escherichia coli</name>
    <dbReference type="NCBI Taxonomy" id="562"/>
</organismHost>
<gene>
    <name type="primary">y11B</name>
    <name type="synonym">uvsW.2</name>
    <name type="synonym">uvsY.-1</name>
</gene>
<accession>P32281</accession>
<feature type="chain" id="PRO_0000165160" description="Uncharacterized 9.0 kDa protein in uvsW-uvsY intergenic region">
    <location>
        <begin position="1"/>
        <end position="74"/>
    </location>
</feature>